<protein>
    <recommendedName>
        <fullName evidence="1">Large ribosomal subunit protein uL6</fullName>
    </recommendedName>
    <alternativeName>
        <fullName evidence="2">50S ribosomal protein L6</fullName>
    </alternativeName>
</protein>
<reference key="1">
    <citation type="submission" date="2009-07" db="EMBL/GenBank/DDBJ databases">
        <title>Complete sequence of Pectobacterium carotovorum subsp. carotovorum PC1.</title>
        <authorList>
            <consortium name="US DOE Joint Genome Institute"/>
            <person name="Lucas S."/>
            <person name="Copeland A."/>
            <person name="Lapidus A."/>
            <person name="Glavina del Rio T."/>
            <person name="Tice H."/>
            <person name="Bruce D."/>
            <person name="Goodwin L."/>
            <person name="Pitluck S."/>
            <person name="Munk A.C."/>
            <person name="Brettin T."/>
            <person name="Detter J.C."/>
            <person name="Han C."/>
            <person name="Tapia R."/>
            <person name="Larimer F."/>
            <person name="Land M."/>
            <person name="Hauser L."/>
            <person name="Kyrpides N."/>
            <person name="Mikhailova N."/>
            <person name="Balakrishnan V."/>
            <person name="Glasner J."/>
            <person name="Perna N.T."/>
        </authorList>
    </citation>
    <scope>NUCLEOTIDE SEQUENCE [LARGE SCALE GENOMIC DNA]</scope>
    <source>
        <strain>PC1</strain>
    </source>
</reference>
<evidence type="ECO:0000255" key="1">
    <source>
        <dbReference type="HAMAP-Rule" id="MF_01365"/>
    </source>
</evidence>
<evidence type="ECO:0000305" key="2"/>
<dbReference type="EMBL" id="CP001657">
    <property type="protein sequence ID" value="ACT14822.1"/>
    <property type="molecule type" value="Genomic_DNA"/>
</dbReference>
<dbReference type="RefSeq" id="WP_015841923.1">
    <property type="nucleotide sequence ID" value="NC_012917.1"/>
</dbReference>
<dbReference type="SMR" id="C6DG59"/>
<dbReference type="STRING" id="561230.PC1_3807"/>
<dbReference type="GeneID" id="67792296"/>
<dbReference type="KEGG" id="pct:PC1_3807"/>
<dbReference type="eggNOG" id="COG0097">
    <property type="taxonomic scope" value="Bacteria"/>
</dbReference>
<dbReference type="HOGENOM" id="CLU_065464_1_2_6"/>
<dbReference type="OrthoDB" id="9805007at2"/>
<dbReference type="Proteomes" id="UP000002736">
    <property type="component" value="Chromosome"/>
</dbReference>
<dbReference type="GO" id="GO:0022625">
    <property type="term" value="C:cytosolic large ribosomal subunit"/>
    <property type="evidence" value="ECO:0007669"/>
    <property type="project" value="TreeGrafter"/>
</dbReference>
<dbReference type="GO" id="GO:0019843">
    <property type="term" value="F:rRNA binding"/>
    <property type="evidence" value="ECO:0007669"/>
    <property type="project" value="UniProtKB-UniRule"/>
</dbReference>
<dbReference type="GO" id="GO:0003735">
    <property type="term" value="F:structural constituent of ribosome"/>
    <property type="evidence" value="ECO:0007669"/>
    <property type="project" value="InterPro"/>
</dbReference>
<dbReference type="GO" id="GO:0002181">
    <property type="term" value="P:cytoplasmic translation"/>
    <property type="evidence" value="ECO:0007669"/>
    <property type="project" value="TreeGrafter"/>
</dbReference>
<dbReference type="FunFam" id="3.90.930.12:FF:000001">
    <property type="entry name" value="50S ribosomal protein L6"/>
    <property type="match status" value="1"/>
</dbReference>
<dbReference type="FunFam" id="3.90.930.12:FF:000002">
    <property type="entry name" value="50S ribosomal protein L6"/>
    <property type="match status" value="1"/>
</dbReference>
<dbReference type="Gene3D" id="3.90.930.12">
    <property type="entry name" value="Ribosomal protein L6, alpha-beta domain"/>
    <property type="match status" value="2"/>
</dbReference>
<dbReference type="HAMAP" id="MF_01365_B">
    <property type="entry name" value="Ribosomal_uL6_B"/>
    <property type="match status" value="1"/>
</dbReference>
<dbReference type="InterPro" id="IPR000702">
    <property type="entry name" value="Ribosomal_uL6-like"/>
</dbReference>
<dbReference type="InterPro" id="IPR036789">
    <property type="entry name" value="Ribosomal_uL6-like_a/b-dom_sf"/>
</dbReference>
<dbReference type="InterPro" id="IPR020040">
    <property type="entry name" value="Ribosomal_uL6_a/b-dom"/>
</dbReference>
<dbReference type="InterPro" id="IPR019906">
    <property type="entry name" value="Ribosomal_uL6_bac-type"/>
</dbReference>
<dbReference type="InterPro" id="IPR002358">
    <property type="entry name" value="Ribosomal_uL6_CS"/>
</dbReference>
<dbReference type="NCBIfam" id="TIGR03654">
    <property type="entry name" value="L6_bact"/>
    <property type="match status" value="1"/>
</dbReference>
<dbReference type="PANTHER" id="PTHR11655">
    <property type="entry name" value="60S/50S RIBOSOMAL PROTEIN L6/L9"/>
    <property type="match status" value="1"/>
</dbReference>
<dbReference type="PANTHER" id="PTHR11655:SF14">
    <property type="entry name" value="LARGE RIBOSOMAL SUBUNIT PROTEIN UL6M"/>
    <property type="match status" value="1"/>
</dbReference>
<dbReference type="Pfam" id="PF00347">
    <property type="entry name" value="Ribosomal_L6"/>
    <property type="match status" value="2"/>
</dbReference>
<dbReference type="PIRSF" id="PIRSF002162">
    <property type="entry name" value="Ribosomal_L6"/>
    <property type="match status" value="1"/>
</dbReference>
<dbReference type="PRINTS" id="PR00059">
    <property type="entry name" value="RIBOSOMALL6"/>
</dbReference>
<dbReference type="SUPFAM" id="SSF56053">
    <property type="entry name" value="Ribosomal protein L6"/>
    <property type="match status" value="2"/>
</dbReference>
<dbReference type="PROSITE" id="PS00525">
    <property type="entry name" value="RIBOSOMAL_L6_1"/>
    <property type="match status" value="1"/>
</dbReference>
<organism>
    <name type="scientific">Pectobacterium carotovorum subsp. carotovorum (strain PC1)</name>
    <dbReference type="NCBI Taxonomy" id="561230"/>
    <lineage>
        <taxon>Bacteria</taxon>
        <taxon>Pseudomonadati</taxon>
        <taxon>Pseudomonadota</taxon>
        <taxon>Gammaproteobacteria</taxon>
        <taxon>Enterobacterales</taxon>
        <taxon>Pectobacteriaceae</taxon>
        <taxon>Pectobacterium</taxon>
    </lineage>
</organism>
<gene>
    <name evidence="1" type="primary">rplF</name>
    <name type="ordered locus">PC1_3807</name>
</gene>
<sequence>MSRVAKAPVVIPAGVEVKLNGQDISIKGKNGELSRKIHDAVEVKQADNALTFAPREGFVDGWAQAGTTRALLNAMVIGVTEGFTKKLQLVGVGYRAAVKGNVVNLSLGFSHPVDHALPAGITAECPSQTEIVLKGADKQVIGQVAAELRAYRRPEPYKGKGVRYADEVVRTKEAKKK</sequence>
<name>RL6_PECCP</name>
<comment type="function">
    <text evidence="1">This protein binds to the 23S rRNA, and is important in its secondary structure. It is located near the subunit interface in the base of the L7/L12 stalk, and near the tRNA binding site of the peptidyltransferase center.</text>
</comment>
<comment type="subunit">
    <text evidence="1">Part of the 50S ribosomal subunit.</text>
</comment>
<comment type="similarity">
    <text evidence="1">Belongs to the universal ribosomal protein uL6 family.</text>
</comment>
<proteinExistence type="inferred from homology"/>
<keyword id="KW-0687">Ribonucleoprotein</keyword>
<keyword id="KW-0689">Ribosomal protein</keyword>
<keyword id="KW-0694">RNA-binding</keyword>
<keyword id="KW-0699">rRNA-binding</keyword>
<feature type="chain" id="PRO_1000214932" description="Large ribosomal subunit protein uL6">
    <location>
        <begin position="1"/>
        <end position="177"/>
    </location>
</feature>
<accession>C6DG59</accession>